<feature type="chain" id="PRO_1000057203" description="Glutamate--tRNA ligase">
    <location>
        <begin position="1"/>
        <end position="471"/>
    </location>
</feature>
<feature type="short sequence motif" description="'HIGH' region" evidence="1">
    <location>
        <begin position="9"/>
        <end position="19"/>
    </location>
</feature>
<feature type="short sequence motif" description="'KMSKS' region" evidence="1">
    <location>
        <begin position="237"/>
        <end position="241"/>
    </location>
</feature>
<feature type="binding site" evidence="1">
    <location>
        <position position="98"/>
    </location>
    <ligand>
        <name>Zn(2+)</name>
        <dbReference type="ChEBI" id="CHEBI:29105"/>
    </ligand>
</feature>
<feature type="binding site" evidence="1">
    <location>
        <position position="100"/>
    </location>
    <ligand>
        <name>Zn(2+)</name>
        <dbReference type="ChEBI" id="CHEBI:29105"/>
    </ligand>
</feature>
<feature type="binding site" evidence="1">
    <location>
        <position position="125"/>
    </location>
    <ligand>
        <name>Zn(2+)</name>
        <dbReference type="ChEBI" id="CHEBI:29105"/>
    </ligand>
</feature>
<feature type="binding site" evidence="1">
    <location>
        <position position="127"/>
    </location>
    <ligand>
        <name>Zn(2+)</name>
        <dbReference type="ChEBI" id="CHEBI:29105"/>
    </ligand>
</feature>
<feature type="binding site" evidence="1">
    <location>
        <position position="240"/>
    </location>
    <ligand>
        <name>ATP</name>
        <dbReference type="ChEBI" id="CHEBI:30616"/>
    </ligand>
</feature>
<name>SYE_YERP3</name>
<gene>
    <name evidence="1" type="primary">gltX</name>
    <name type="ordered locus">YpsIP31758_1325</name>
</gene>
<dbReference type="EC" id="6.1.1.17" evidence="1"/>
<dbReference type="EMBL" id="CP000720">
    <property type="protein sequence ID" value="ABS47901.1"/>
    <property type="molecule type" value="Genomic_DNA"/>
</dbReference>
<dbReference type="RefSeq" id="WP_012104855.1">
    <property type="nucleotide sequence ID" value="NC_009708.1"/>
</dbReference>
<dbReference type="SMR" id="A7FGC6"/>
<dbReference type="KEGG" id="ypi:YpsIP31758_1325"/>
<dbReference type="HOGENOM" id="CLU_015768_6_0_6"/>
<dbReference type="Proteomes" id="UP000002412">
    <property type="component" value="Chromosome"/>
</dbReference>
<dbReference type="GO" id="GO:0005829">
    <property type="term" value="C:cytosol"/>
    <property type="evidence" value="ECO:0007669"/>
    <property type="project" value="TreeGrafter"/>
</dbReference>
<dbReference type="GO" id="GO:0005524">
    <property type="term" value="F:ATP binding"/>
    <property type="evidence" value="ECO:0007669"/>
    <property type="project" value="UniProtKB-UniRule"/>
</dbReference>
<dbReference type="GO" id="GO:0004818">
    <property type="term" value="F:glutamate-tRNA ligase activity"/>
    <property type="evidence" value="ECO:0007669"/>
    <property type="project" value="UniProtKB-UniRule"/>
</dbReference>
<dbReference type="GO" id="GO:0000049">
    <property type="term" value="F:tRNA binding"/>
    <property type="evidence" value="ECO:0007669"/>
    <property type="project" value="InterPro"/>
</dbReference>
<dbReference type="GO" id="GO:0008270">
    <property type="term" value="F:zinc ion binding"/>
    <property type="evidence" value="ECO:0007669"/>
    <property type="project" value="UniProtKB-UniRule"/>
</dbReference>
<dbReference type="GO" id="GO:0006424">
    <property type="term" value="P:glutamyl-tRNA aminoacylation"/>
    <property type="evidence" value="ECO:0007669"/>
    <property type="project" value="UniProtKB-UniRule"/>
</dbReference>
<dbReference type="CDD" id="cd00808">
    <property type="entry name" value="GluRS_core"/>
    <property type="match status" value="1"/>
</dbReference>
<dbReference type="FunFam" id="1.10.10.350:FF:000001">
    <property type="entry name" value="Glutamate--tRNA ligase"/>
    <property type="match status" value="1"/>
</dbReference>
<dbReference type="FunFam" id="3.40.50.620:FF:000007">
    <property type="entry name" value="Glutamate--tRNA ligase"/>
    <property type="match status" value="1"/>
</dbReference>
<dbReference type="Gene3D" id="1.10.10.350">
    <property type="match status" value="1"/>
</dbReference>
<dbReference type="Gene3D" id="3.40.50.620">
    <property type="entry name" value="HUPs"/>
    <property type="match status" value="1"/>
</dbReference>
<dbReference type="HAMAP" id="MF_00022">
    <property type="entry name" value="Glu_tRNA_synth_type1"/>
    <property type="match status" value="1"/>
</dbReference>
<dbReference type="InterPro" id="IPR045462">
    <property type="entry name" value="aa-tRNA-synth_I_cd-bd"/>
</dbReference>
<dbReference type="InterPro" id="IPR020751">
    <property type="entry name" value="aa-tRNA-synth_I_codon-bd_sub2"/>
</dbReference>
<dbReference type="InterPro" id="IPR001412">
    <property type="entry name" value="aa-tRNA-synth_I_CS"/>
</dbReference>
<dbReference type="InterPro" id="IPR008925">
    <property type="entry name" value="aa_tRNA-synth_I_cd-bd_sf"/>
</dbReference>
<dbReference type="InterPro" id="IPR004527">
    <property type="entry name" value="Glu-tRNA-ligase_bac/mito"/>
</dbReference>
<dbReference type="InterPro" id="IPR000924">
    <property type="entry name" value="Glu/Gln-tRNA-synth"/>
</dbReference>
<dbReference type="InterPro" id="IPR020058">
    <property type="entry name" value="Glu/Gln-tRNA-synth_Ib_cat-dom"/>
</dbReference>
<dbReference type="InterPro" id="IPR049940">
    <property type="entry name" value="GluQ/Sye"/>
</dbReference>
<dbReference type="InterPro" id="IPR033910">
    <property type="entry name" value="GluRS_core"/>
</dbReference>
<dbReference type="InterPro" id="IPR014729">
    <property type="entry name" value="Rossmann-like_a/b/a_fold"/>
</dbReference>
<dbReference type="NCBIfam" id="TIGR00464">
    <property type="entry name" value="gltX_bact"/>
    <property type="match status" value="1"/>
</dbReference>
<dbReference type="PANTHER" id="PTHR43311">
    <property type="entry name" value="GLUTAMATE--TRNA LIGASE"/>
    <property type="match status" value="1"/>
</dbReference>
<dbReference type="PANTHER" id="PTHR43311:SF2">
    <property type="entry name" value="GLUTAMATE--TRNA LIGASE, MITOCHONDRIAL-RELATED"/>
    <property type="match status" value="1"/>
</dbReference>
<dbReference type="Pfam" id="PF19269">
    <property type="entry name" value="Anticodon_2"/>
    <property type="match status" value="1"/>
</dbReference>
<dbReference type="Pfam" id="PF00749">
    <property type="entry name" value="tRNA-synt_1c"/>
    <property type="match status" value="1"/>
</dbReference>
<dbReference type="PRINTS" id="PR00987">
    <property type="entry name" value="TRNASYNTHGLU"/>
</dbReference>
<dbReference type="SUPFAM" id="SSF48163">
    <property type="entry name" value="An anticodon-binding domain of class I aminoacyl-tRNA synthetases"/>
    <property type="match status" value="1"/>
</dbReference>
<dbReference type="SUPFAM" id="SSF52374">
    <property type="entry name" value="Nucleotidylyl transferase"/>
    <property type="match status" value="1"/>
</dbReference>
<dbReference type="PROSITE" id="PS00178">
    <property type="entry name" value="AA_TRNA_LIGASE_I"/>
    <property type="match status" value="1"/>
</dbReference>
<comment type="function">
    <text evidence="1">Catalyzes the attachment of glutamate to tRNA(Glu) in a two-step reaction: glutamate is first activated by ATP to form Glu-AMP and then transferred to the acceptor end of tRNA(Glu).</text>
</comment>
<comment type="catalytic activity">
    <reaction evidence="1">
        <text>tRNA(Glu) + L-glutamate + ATP = L-glutamyl-tRNA(Glu) + AMP + diphosphate</text>
        <dbReference type="Rhea" id="RHEA:23540"/>
        <dbReference type="Rhea" id="RHEA-COMP:9663"/>
        <dbReference type="Rhea" id="RHEA-COMP:9680"/>
        <dbReference type="ChEBI" id="CHEBI:29985"/>
        <dbReference type="ChEBI" id="CHEBI:30616"/>
        <dbReference type="ChEBI" id="CHEBI:33019"/>
        <dbReference type="ChEBI" id="CHEBI:78442"/>
        <dbReference type="ChEBI" id="CHEBI:78520"/>
        <dbReference type="ChEBI" id="CHEBI:456215"/>
        <dbReference type="EC" id="6.1.1.17"/>
    </reaction>
</comment>
<comment type="cofactor">
    <cofactor evidence="1">
        <name>Zn(2+)</name>
        <dbReference type="ChEBI" id="CHEBI:29105"/>
    </cofactor>
    <text evidence="1">Binds 1 zinc ion per subunit.</text>
</comment>
<comment type="subunit">
    <text evidence="1">Monomer.</text>
</comment>
<comment type="subcellular location">
    <subcellularLocation>
        <location evidence="1">Cytoplasm</location>
    </subcellularLocation>
</comment>
<comment type="similarity">
    <text evidence="1">Belongs to the class-I aminoacyl-tRNA synthetase family. Glutamate--tRNA ligase type 1 subfamily.</text>
</comment>
<accession>A7FGC6</accession>
<proteinExistence type="inferred from homology"/>
<keyword id="KW-0030">Aminoacyl-tRNA synthetase</keyword>
<keyword id="KW-0067">ATP-binding</keyword>
<keyword id="KW-0963">Cytoplasm</keyword>
<keyword id="KW-0436">Ligase</keyword>
<keyword id="KW-0479">Metal-binding</keyword>
<keyword id="KW-0547">Nucleotide-binding</keyword>
<keyword id="KW-0648">Protein biosynthesis</keyword>
<keyword id="KW-0862">Zinc</keyword>
<reference key="1">
    <citation type="journal article" date="2007" name="PLoS Genet.">
        <title>The complete genome sequence of Yersinia pseudotuberculosis IP31758, the causative agent of Far East scarlet-like fever.</title>
        <authorList>
            <person name="Eppinger M."/>
            <person name="Rosovitz M.J."/>
            <person name="Fricke W.F."/>
            <person name="Rasko D.A."/>
            <person name="Kokorina G."/>
            <person name="Fayolle C."/>
            <person name="Lindler L.E."/>
            <person name="Carniel E."/>
            <person name="Ravel J."/>
        </authorList>
    </citation>
    <scope>NUCLEOTIDE SEQUENCE [LARGE SCALE GENOMIC DNA]</scope>
    <source>
        <strain>IP 31758</strain>
    </source>
</reference>
<organism>
    <name type="scientific">Yersinia pseudotuberculosis serotype O:1b (strain IP 31758)</name>
    <dbReference type="NCBI Taxonomy" id="349747"/>
    <lineage>
        <taxon>Bacteria</taxon>
        <taxon>Pseudomonadati</taxon>
        <taxon>Pseudomonadota</taxon>
        <taxon>Gammaproteobacteria</taxon>
        <taxon>Enterobacterales</taxon>
        <taxon>Yersiniaceae</taxon>
        <taxon>Yersinia</taxon>
    </lineage>
</organism>
<sequence length="471" mass="53168">MKIKTRFAPSPTGYLHVGGARTALYSWLFSRHLGGEFVLRIEDTDLERSTQEAIDAIMDGMNWLNLDWDEGPYFQTKRFDRYNAVIDQMLDAGTAYRCYCSKERLEALREAQMANGEKPRYDGHCRDSQCTHGADEPSVVRFRNPQEGSVIFDDKIRGPIEFSNQELDDLIIRRTDGSPTYNFCVVIDDWDMEITHVIRGEDHINNTPRQINILKALGAPVPEYAHVSMILGDDGKKLSKRHGAVGVMQYRDDGYLPEALLNYLVRLGWSHGDQEIFSIEEMTQLFTLDAVSKSASAFNTEKLQWLNHHYINSLPPEQVAVHLSWHVEQLGIDTRNGPELVEIVKLLGERCKTLKEMAESCRYFYEEFDAFDVDAAKKHLRPVARQPLEAVKVKLAAITEWTTENVHNAIQGTADELGVGMGKVGMPLRVAVTGVGQSPGMDVTVHAIGQARTLARIDKALAFISEREAQQ</sequence>
<evidence type="ECO:0000255" key="1">
    <source>
        <dbReference type="HAMAP-Rule" id="MF_00022"/>
    </source>
</evidence>
<protein>
    <recommendedName>
        <fullName evidence="1">Glutamate--tRNA ligase</fullName>
        <ecNumber evidence="1">6.1.1.17</ecNumber>
    </recommendedName>
    <alternativeName>
        <fullName evidence="1">Glutamyl-tRNA synthetase</fullName>
        <shortName evidence="1">GluRS</shortName>
    </alternativeName>
</protein>